<dbReference type="EC" id="2.7.1.33" evidence="1"/>
<dbReference type="EMBL" id="CP000107">
    <property type="protein sequence ID" value="AAZ68228.1"/>
    <property type="molecule type" value="Genomic_DNA"/>
</dbReference>
<dbReference type="RefSeq" id="WP_011304306.1">
    <property type="nucleotide sequence ID" value="NC_007354.1"/>
</dbReference>
<dbReference type="SMR" id="Q3YSS7"/>
<dbReference type="STRING" id="269484.Ecaj_0177"/>
<dbReference type="KEGG" id="ecn:Ecaj_0177"/>
<dbReference type="eggNOG" id="COG1521">
    <property type="taxonomic scope" value="Bacteria"/>
</dbReference>
<dbReference type="HOGENOM" id="CLU_066627_1_0_5"/>
<dbReference type="InParanoid" id="Q3YSS7"/>
<dbReference type="UniPathway" id="UPA00241">
    <property type="reaction ID" value="UER00352"/>
</dbReference>
<dbReference type="Proteomes" id="UP000000435">
    <property type="component" value="Chromosome"/>
</dbReference>
<dbReference type="GO" id="GO:0005737">
    <property type="term" value="C:cytoplasm"/>
    <property type="evidence" value="ECO:0007669"/>
    <property type="project" value="UniProtKB-SubCell"/>
</dbReference>
<dbReference type="GO" id="GO:0005524">
    <property type="term" value="F:ATP binding"/>
    <property type="evidence" value="ECO:0007669"/>
    <property type="project" value="UniProtKB-UniRule"/>
</dbReference>
<dbReference type="GO" id="GO:0004594">
    <property type="term" value="F:pantothenate kinase activity"/>
    <property type="evidence" value="ECO:0007669"/>
    <property type="project" value="UniProtKB-UniRule"/>
</dbReference>
<dbReference type="GO" id="GO:0015937">
    <property type="term" value="P:coenzyme A biosynthetic process"/>
    <property type="evidence" value="ECO:0007669"/>
    <property type="project" value="UniProtKB-UniRule"/>
</dbReference>
<dbReference type="CDD" id="cd24015">
    <property type="entry name" value="ASKHA_NBD_PanK-III"/>
    <property type="match status" value="1"/>
</dbReference>
<dbReference type="Gene3D" id="3.30.420.40">
    <property type="match status" value="2"/>
</dbReference>
<dbReference type="HAMAP" id="MF_01274">
    <property type="entry name" value="Pantothen_kinase_3"/>
    <property type="match status" value="1"/>
</dbReference>
<dbReference type="InterPro" id="IPR043129">
    <property type="entry name" value="ATPase_NBD"/>
</dbReference>
<dbReference type="InterPro" id="IPR004619">
    <property type="entry name" value="Type_III_PanK"/>
</dbReference>
<dbReference type="NCBIfam" id="TIGR00671">
    <property type="entry name" value="baf"/>
    <property type="match status" value="1"/>
</dbReference>
<dbReference type="NCBIfam" id="NF009848">
    <property type="entry name" value="PRK13318.1-6"/>
    <property type="match status" value="1"/>
</dbReference>
<dbReference type="PANTHER" id="PTHR34265">
    <property type="entry name" value="TYPE III PANTOTHENATE KINASE"/>
    <property type="match status" value="1"/>
</dbReference>
<dbReference type="PANTHER" id="PTHR34265:SF1">
    <property type="entry name" value="TYPE III PANTOTHENATE KINASE"/>
    <property type="match status" value="1"/>
</dbReference>
<dbReference type="Pfam" id="PF03309">
    <property type="entry name" value="Pan_kinase"/>
    <property type="match status" value="1"/>
</dbReference>
<dbReference type="SUPFAM" id="SSF53067">
    <property type="entry name" value="Actin-like ATPase domain"/>
    <property type="match status" value="2"/>
</dbReference>
<sequence>MLIAIDVGNTNIKFAICTSNRILKIIRIASQQAKTADQYFFYLNNIINQLNTDFKNINNIIISSVVPSITKPMLELSKNYFNINPIILDNNHADIFNIKINLQNKALGSDRLADIIAASNIYPNKDLLIIGMGTATVFNLLNKDKCIYGQVIAPGAHILAKSMRQFTALLPEVSVSKQDKVVHNNIYHAMESGVYWGYITMVNGMIEKIIKEEKKDLHVIATGGNSYLFFDHKTAINNIETDLTIKGILYLHNMLSNNTAQNSI</sequence>
<keyword id="KW-0067">ATP-binding</keyword>
<keyword id="KW-0173">Coenzyme A biosynthesis</keyword>
<keyword id="KW-0963">Cytoplasm</keyword>
<keyword id="KW-0418">Kinase</keyword>
<keyword id="KW-0547">Nucleotide-binding</keyword>
<keyword id="KW-0630">Potassium</keyword>
<keyword id="KW-0808">Transferase</keyword>
<comment type="function">
    <text evidence="1">Catalyzes the phosphorylation of pantothenate (Pan), the first step in CoA biosynthesis.</text>
</comment>
<comment type="catalytic activity">
    <reaction evidence="1">
        <text>(R)-pantothenate + ATP = (R)-4'-phosphopantothenate + ADP + H(+)</text>
        <dbReference type="Rhea" id="RHEA:16373"/>
        <dbReference type="ChEBI" id="CHEBI:10986"/>
        <dbReference type="ChEBI" id="CHEBI:15378"/>
        <dbReference type="ChEBI" id="CHEBI:29032"/>
        <dbReference type="ChEBI" id="CHEBI:30616"/>
        <dbReference type="ChEBI" id="CHEBI:456216"/>
        <dbReference type="EC" id="2.7.1.33"/>
    </reaction>
</comment>
<comment type="cofactor">
    <cofactor evidence="1">
        <name>NH4(+)</name>
        <dbReference type="ChEBI" id="CHEBI:28938"/>
    </cofactor>
    <cofactor evidence="1">
        <name>K(+)</name>
        <dbReference type="ChEBI" id="CHEBI:29103"/>
    </cofactor>
    <text evidence="1">A monovalent cation. Ammonium or potassium.</text>
</comment>
<comment type="pathway">
    <text evidence="1">Cofactor biosynthesis; coenzyme A biosynthesis; CoA from (R)-pantothenate: step 1/5.</text>
</comment>
<comment type="subunit">
    <text evidence="1">Homodimer.</text>
</comment>
<comment type="subcellular location">
    <subcellularLocation>
        <location evidence="1">Cytoplasm</location>
    </subcellularLocation>
</comment>
<comment type="similarity">
    <text evidence="1">Belongs to the type III pantothenate kinase family.</text>
</comment>
<reference key="1">
    <citation type="journal article" date="2006" name="J. Bacteriol.">
        <title>The genome of the obligately intracellular bacterium Ehrlichia canis reveals themes of complex membrane structure and immune evasion strategies.</title>
        <authorList>
            <person name="Mavromatis K."/>
            <person name="Doyle C.K."/>
            <person name="Lykidis A."/>
            <person name="Ivanova N."/>
            <person name="Francino M.P."/>
            <person name="Chain P."/>
            <person name="Shin M."/>
            <person name="Malfatti S."/>
            <person name="Larimer F."/>
            <person name="Copeland A."/>
            <person name="Detter J.C."/>
            <person name="Land M."/>
            <person name="Richardson P.M."/>
            <person name="Yu X.J."/>
            <person name="Walker D.H."/>
            <person name="McBride J.W."/>
            <person name="Kyrpides N.C."/>
        </authorList>
    </citation>
    <scope>NUCLEOTIDE SEQUENCE [LARGE SCALE GENOMIC DNA]</scope>
    <source>
        <strain>Jake</strain>
    </source>
</reference>
<organism>
    <name type="scientific">Ehrlichia canis (strain Jake)</name>
    <dbReference type="NCBI Taxonomy" id="269484"/>
    <lineage>
        <taxon>Bacteria</taxon>
        <taxon>Pseudomonadati</taxon>
        <taxon>Pseudomonadota</taxon>
        <taxon>Alphaproteobacteria</taxon>
        <taxon>Rickettsiales</taxon>
        <taxon>Anaplasmataceae</taxon>
        <taxon>Ehrlichia</taxon>
    </lineage>
</organism>
<proteinExistence type="inferred from homology"/>
<feature type="chain" id="PRO_0000267525" description="Type III pantothenate kinase">
    <location>
        <begin position="1"/>
        <end position="264"/>
    </location>
</feature>
<feature type="active site" description="Proton acceptor" evidence="1">
    <location>
        <position position="110"/>
    </location>
</feature>
<feature type="binding site" evidence="1">
    <location>
        <begin position="6"/>
        <end position="13"/>
    </location>
    <ligand>
        <name>ATP</name>
        <dbReference type="ChEBI" id="CHEBI:30616"/>
    </ligand>
</feature>
<feature type="binding site" evidence="1">
    <location>
        <begin position="108"/>
        <end position="111"/>
    </location>
    <ligand>
        <name>substrate</name>
    </ligand>
</feature>
<feature type="binding site" evidence="1">
    <location>
        <position position="134"/>
    </location>
    <ligand>
        <name>ATP</name>
        <dbReference type="ChEBI" id="CHEBI:30616"/>
    </ligand>
</feature>
<protein>
    <recommendedName>
        <fullName evidence="1">Type III pantothenate kinase</fullName>
        <ecNumber evidence="1">2.7.1.33</ecNumber>
    </recommendedName>
    <alternativeName>
        <fullName evidence="1">PanK-III</fullName>
    </alternativeName>
    <alternativeName>
        <fullName evidence="1">Pantothenic acid kinase</fullName>
    </alternativeName>
</protein>
<name>COAX_EHRCJ</name>
<gene>
    <name evidence="1" type="primary">coaX</name>
    <name type="ordered locus">Ecaj_0177</name>
</gene>
<evidence type="ECO:0000255" key="1">
    <source>
        <dbReference type="HAMAP-Rule" id="MF_01274"/>
    </source>
</evidence>
<accession>Q3YSS7</accession>